<sequence>MTPAVSPAHTVLFEAKARKGISFEQIGKAIGRDEVWVASAFYGQAKFNEEELKKLSEVLEISSAQIVKELGDQWFPNRGLGPVPPSDPVIYRLFEGVLVYGHPIKAIIHEKFGDGIMSMIDCNINVERKPDPKGDRVVVTFDGKFLPYSKW</sequence>
<evidence type="ECO:0000255" key="1">
    <source>
        <dbReference type="HAMAP-Rule" id="MF_03139"/>
    </source>
</evidence>
<organism>
    <name type="scientific">Coprinopsis cinerea (strain Okayama-7 / 130 / ATCC MYA-4618 / FGSC 9003)</name>
    <name type="common">Inky cap fungus</name>
    <name type="synonym">Hormographiella aspergillata</name>
    <dbReference type="NCBI Taxonomy" id="240176"/>
    <lineage>
        <taxon>Eukaryota</taxon>
        <taxon>Fungi</taxon>
        <taxon>Dikarya</taxon>
        <taxon>Basidiomycota</taxon>
        <taxon>Agaricomycotina</taxon>
        <taxon>Agaricomycetes</taxon>
        <taxon>Agaricomycetidae</taxon>
        <taxon>Agaricales</taxon>
        <taxon>Agaricineae</taxon>
        <taxon>Psathyrellaceae</taxon>
        <taxon>Coprinopsis</taxon>
    </lineage>
</organism>
<keyword id="KW-0456">Lyase</keyword>
<keyword id="KW-1185">Reference proteome</keyword>
<name>CYNS_COPC7</name>
<reference key="1">
    <citation type="journal article" date="2010" name="Proc. Natl. Acad. Sci. U.S.A.">
        <title>Insights into evolution of multicellular fungi from the assembled chromosomes of the mushroom Coprinopsis cinerea (Coprinus cinereus).</title>
        <authorList>
            <person name="Stajich J.E."/>
            <person name="Wilke S.K."/>
            <person name="Ahren D."/>
            <person name="Au C.H."/>
            <person name="Birren B.W."/>
            <person name="Borodovsky M."/>
            <person name="Burns C."/>
            <person name="Canbaeck B."/>
            <person name="Casselton L.A."/>
            <person name="Cheng C.K."/>
            <person name="Deng J."/>
            <person name="Dietrich F.S."/>
            <person name="Fargo D.C."/>
            <person name="Farman M.L."/>
            <person name="Gathman A.C."/>
            <person name="Goldberg J."/>
            <person name="Guigo R."/>
            <person name="Hoegger P.J."/>
            <person name="Hooker J.B."/>
            <person name="Huggins A."/>
            <person name="James T.Y."/>
            <person name="Kamada T."/>
            <person name="Kilaru S."/>
            <person name="Kodira C."/>
            <person name="Kuees U."/>
            <person name="Kupfer D."/>
            <person name="Kwan H.S."/>
            <person name="Lomsadze A."/>
            <person name="Li W."/>
            <person name="Lilly W.W."/>
            <person name="Ma L.-J."/>
            <person name="Mackey A.J."/>
            <person name="Manning G."/>
            <person name="Martin F."/>
            <person name="Muraguchi H."/>
            <person name="Natvig D.O."/>
            <person name="Palmerini H."/>
            <person name="Ramesh M.A."/>
            <person name="Rehmeyer C.J."/>
            <person name="Roe B.A."/>
            <person name="Shenoy N."/>
            <person name="Stanke M."/>
            <person name="Ter-Hovhannisyan V."/>
            <person name="Tunlid A."/>
            <person name="Velagapudi R."/>
            <person name="Vision T.J."/>
            <person name="Zeng Q."/>
            <person name="Zolan M.E."/>
            <person name="Pukkila P.J."/>
        </authorList>
    </citation>
    <scope>NUCLEOTIDE SEQUENCE [LARGE SCALE GENOMIC DNA]</scope>
    <source>
        <strain>Okayama-7 / 130 / ATCC MYA-4618 / FGSC 9003</strain>
    </source>
</reference>
<gene>
    <name evidence="1" type="primary">CYN1</name>
    <name type="ORF">CC1G_06180</name>
</gene>
<proteinExistence type="inferred from homology"/>
<feature type="chain" id="PRO_0000403249" description="Cyanate hydratase">
    <location>
        <begin position="1"/>
        <end position="151"/>
    </location>
</feature>
<feature type="active site" evidence="1">
    <location>
        <position position="92"/>
    </location>
</feature>
<feature type="active site" evidence="1">
    <location>
        <position position="95"/>
    </location>
</feature>
<feature type="active site" evidence="1">
    <location>
        <position position="118"/>
    </location>
</feature>
<protein>
    <recommendedName>
        <fullName evidence="1">Cyanate hydratase</fullName>
        <shortName evidence="1">Cyanase</shortName>
        <ecNumber evidence="1">4.2.1.104</ecNumber>
    </recommendedName>
    <alternativeName>
        <fullName evidence="1">Cyanate hydrolase</fullName>
    </alternativeName>
    <alternativeName>
        <fullName evidence="1">Cyanate lyase</fullName>
    </alternativeName>
</protein>
<accession>A8NV38</accession>
<comment type="function">
    <text evidence="1">Catalyzes the reaction of cyanate with bicarbonate to produce ammonia and carbon dioxide.</text>
</comment>
<comment type="catalytic activity">
    <reaction evidence="1">
        <text>cyanate + hydrogencarbonate + 3 H(+) = NH4(+) + 2 CO2</text>
        <dbReference type="Rhea" id="RHEA:11120"/>
        <dbReference type="ChEBI" id="CHEBI:15378"/>
        <dbReference type="ChEBI" id="CHEBI:16526"/>
        <dbReference type="ChEBI" id="CHEBI:17544"/>
        <dbReference type="ChEBI" id="CHEBI:28938"/>
        <dbReference type="ChEBI" id="CHEBI:29195"/>
        <dbReference type="EC" id="4.2.1.104"/>
    </reaction>
</comment>
<comment type="similarity">
    <text evidence="1">Belongs to the cyanase family.</text>
</comment>
<dbReference type="EC" id="4.2.1.104" evidence="1"/>
<dbReference type="EMBL" id="AACS02000004">
    <property type="protein sequence ID" value="EAU85164.2"/>
    <property type="molecule type" value="Genomic_DNA"/>
</dbReference>
<dbReference type="RefSeq" id="XP_001836593.2">
    <property type="nucleotide sequence ID" value="XM_001836541.2"/>
</dbReference>
<dbReference type="SMR" id="A8NV38"/>
<dbReference type="STRING" id="240176.A8NV38"/>
<dbReference type="GeneID" id="6013139"/>
<dbReference type="KEGG" id="cci:CC1G_06180"/>
<dbReference type="VEuPathDB" id="FungiDB:CC1G_06180"/>
<dbReference type="eggNOG" id="ENOG502S3YJ">
    <property type="taxonomic scope" value="Eukaryota"/>
</dbReference>
<dbReference type="HOGENOM" id="CLU_103452_1_0_1"/>
<dbReference type="InParanoid" id="A8NV38"/>
<dbReference type="OMA" id="YELVMIN"/>
<dbReference type="OrthoDB" id="10019422at2759"/>
<dbReference type="Proteomes" id="UP000001861">
    <property type="component" value="Unassembled WGS sequence"/>
</dbReference>
<dbReference type="GO" id="GO:0008824">
    <property type="term" value="F:cyanate hydratase activity"/>
    <property type="evidence" value="ECO:0007669"/>
    <property type="project" value="UniProtKB-UniRule"/>
</dbReference>
<dbReference type="GO" id="GO:0003677">
    <property type="term" value="F:DNA binding"/>
    <property type="evidence" value="ECO:0007669"/>
    <property type="project" value="InterPro"/>
</dbReference>
<dbReference type="GO" id="GO:0009439">
    <property type="term" value="P:cyanate metabolic process"/>
    <property type="evidence" value="ECO:0007669"/>
    <property type="project" value="UniProtKB-UniRule"/>
</dbReference>
<dbReference type="CDD" id="cd00559">
    <property type="entry name" value="Cyanase_C"/>
    <property type="match status" value="1"/>
</dbReference>
<dbReference type="Gene3D" id="3.30.1160.10">
    <property type="entry name" value="Cyanate lyase, C-terminal domain"/>
    <property type="match status" value="1"/>
</dbReference>
<dbReference type="Gene3D" id="1.10.260.40">
    <property type="entry name" value="lambda repressor-like DNA-binding domains"/>
    <property type="match status" value="1"/>
</dbReference>
<dbReference type="HAMAP" id="MF_00535">
    <property type="entry name" value="Cyanate_hydrat"/>
    <property type="match status" value="1"/>
</dbReference>
<dbReference type="InterPro" id="IPR008076">
    <property type="entry name" value="Cyanase"/>
</dbReference>
<dbReference type="InterPro" id="IPR003712">
    <property type="entry name" value="Cyanate_lyase_C"/>
</dbReference>
<dbReference type="InterPro" id="IPR036581">
    <property type="entry name" value="Cyanate_lyase_C_sf"/>
</dbReference>
<dbReference type="InterPro" id="IPR048564">
    <property type="entry name" value="CYNS_N"/>
</dbReference>
<dbReference type="InterPro" id="IPR010982">
    <property type="entry name" value="Lambda_DNA-bd_dom_sf"/>
</dbReference>
<dbReference type="NCBIfam" id="TIGR00673">
    <property type="entry name" value="cynS"/>
    <property type="match status" value="1"/>
</dbReference>
<dbReference type="NCBIfam" id="NF002773">
    <property type="entry name" value="PRK02866.1"/>
    <property type="match status" value="1"/>
</dbReference>
<dbReference type="PANTHER" id="PTHR34186">
    <property type="entry name" value="CYANATE HYDRATASE"/>
    <property type="match status" value="1"/>
</dbReference>
<dbReference type="PANTHER" id="PTHR34186:SF2">
    <property type="entry name" value="CYANATE HYDRATASE"/>
    <property type="match status" value="1"/>
</dbReference>
<dbReference type="Pfam" id="PF02560">
    <property type="entry name" value="Cyanate_lyase"/>
    <property type="match status" value="1"/>
</dbReference>
<dbReference type="Pfam" id="PF21291">
    <property type="entry name" value="CYNS_N"/>
    <property type="match status" value="1"/>
</dbReference>
<dbReference type="PIRSF" id="PIRSF001263">
    <property type="entry name" value="Cyanate_hydratas"/>
    <property type="match status" value="1"/>
</dbReference>
<dbReference type="PRINTS" id="PR01693">
    <property type="entry name" value="CYANASE"/>
</dbReference>
<dbReference type="SMART" id="SM01116">
    <property type="entry name" value="Cyanate_lyase"/>
    <property type="match status" value="1"/>
</dbReference>
<dbReference type="SUPFAM" id="SSF55234">
    <property type="entry name" value="Cyanase C-terminal domain"/>
    <property type="match status" value="1"/>
</dbReference>
<dbReference type="SUPFAM" id="SSF47413">
    <property type="entry name" value="lambda repressor-like DNA-binding domains"/>
    <property type="match status" value="1"/>
</dbReference>